<reference key="1">
    <citation type="journal article" date="2004" name="Nature">
        <title>Genome evolution in yeasts.</title>
        <authorList>
            <person name="Dujon B."/>
            <person name="Sherman D."/>
            <person name="Fischer G."/>
            <person name="Durrens P."/>
            <person name="Casaregola S."/>
            <person name="Lafontaine I."/>
            <person name="de Montigny J."/>
            <person name="Marck C."/>
            <person name="Neuveglise C."/>
            <person name="Talla E."/>
            <person name="Goffard N."/>
            <person name="Frangeul L."/>
            <person name="Aigle M."/>
            <person name="Anthouard V."/>
            <person name="Babour A."/>
            <person name="Barbe V."/>
            <person name="Barnay S."/>
            <person name="Blanchin S."/>
            <person name="Beckerich J.-M."/>
            <person name="Beyne E."/>
            <person name="Bleykasten C."/>
            <person name="Boisrame A."/>
            <person name="Boyer J."/>
            <person name="Cattolico L."/>
            <person name="Confanioleri F."/>
            <person name="de Daruvar A."/>
            <person name="Despons L."/>
            <person name="Fabre E."/>
            <person name="Fairhead C."/>
            <person name="Ferry-Dumazet H."/>
            <person name="Groppi A."/>
            <person name="Hantraye F."/>
            <person name="Hennequin C."/>
            <person name="Jauniaux N."/>
            <person name="Joyet P."/>
            <person name="Kachouri R."/>
            <person name="Kerrest A."/>
            <person name="Koszul R."/>
            <person name="Lemaire M."/>
            <person name="Lesur I."/>
            <person name="Ma L."/>
            <person name="Muller H."/>
            <person name="Nicaud J.-M."/>
            <person name="Nikolski M."/>
            <person name="Oztas S."/>
            <person name="Ozier-Kalogeropoulos O."/>
            <person name="Pellenz S."/>
            <person name="Potier S."/>
            <person name="Richard G.-F."/>
            <person name="Straub M.-L."/>
            <person name="Suleau A."/>
            <person name="Swennen D."/>
            <person name="Tekaia F."/>
            <person name="Wesolowski-Louvel M."/>
            <person name="Westhof E."/>
            <person name="Wirth B."/>
            <person name="Zeniou-Meyer M."/>
            <person name="Zivanovic Y."/>
            <person name="Bolotin-Fukuhara M."/>
            <person name="Thierry A."/>
            <person name="Bouchier C."/>
            <person name="Caudron B."/>
            <person name="Scarpelli C."/>
            <person name="Gaillardin C."/>
            <person name="Weissenbach J."/>
            <person name="Wincker P."/>
            <person name="Souciet J.-L."/>
        </authorList>
    </citation>
    <scope>NUCLEOTIDE SEQUENCE [LARGE SCALE GENOMIC DNA]</scope>
    <source>
        <strain>CLIB 122 / E 150</strain>
    </source>
</reference>
<sequence>MPPKGHKKTADGDFRPVNSAGNTIQAKQKYSIDDLLYPKSTIKNLAKETLPDDAIISKDALTAIQRAATLFVSYMASHGNASAEAGGRKKITPQDVFVALKDVDLAQFVPSVTQSVNEFEQEVAQRKKDKVVRAQDDQDHISSSESETEATEEEGNKRIRTDE</sequence>
<protein>
    <recommendedName>
        <fullName>DNA polymerase epsilon subunit D</fullName>
    </recommendedName>
    <alternativeName>
        <fullName>DNA polymerase II subunit D</fullName>
    </alternativeName>
</protein>
<organism>
    <name type="scientific">Yarrowia lipolytica (strain CLIB 122 / E 150)</name>
    <name type="common">Yeast</name>
    <name type="synonym">Candida lipolytica</name>
    <dbReference type="NCBI Taxonomy" id="284591"/>
    <lineage>
        <taxon>Eukaryota</taxon>
        <taxon>Fungi</taxon>
        <taxon>Dikarya</taxon>
        <taxon>Ascomycota</taxon>
        <taxon>Saccharomycotina</taxon>
        <taxon>Dipodascomycetes</taxon>
        <taxon>Dipodascales</taxon>
        <taxon>Dipodascales incertae sedis</taxon>
        <taxon>Yarrowia</taxon>
    </lineage>
</organism>
<name>DPB4_YARLI</name>
<accession>Q6CHS6</accession>
<proteinExistence type="inferred from homology"/>
<dbReference type="EMBL" id="CR382127">
    <property type="protein sequence ID" value="CAG83710.1"/>
    <property type="molecule type" value="Genomic_DNA"/>
</dbReference>
<dbReference type="RefSeq" id="XP_499785.1">
    <property type="nucleotide sequence ID" value="XM_499785.1"/>
</dbReference>
<dbReference type="SMR" id="Q6CHS6"/>
<dbReference type="FunCoup" id="Q6CHS6">
    <property type="interactions" value="217"/>
</dbReference>
<dbReference type="STRING" id="284591.Q6CHS6"/>
<dbReference type="EnsemblFungi" id="CAG83710">
    <property type="protein sequence ID" value="CAG83710"/>
    <property type="gene ID" value="YALI0_A05401g"/>
</dbReference>
<dbReference type="KEGG" id="yli:2905945"/>
<dbReference type="VEuPathDB" id="FungiDB:YALI0_A05401g"/>
<dbReference type="HOGENOM" id="CLU_066247_7_4_1"/>
<dbReference type="InParanoid" id="Q6CHS6"/>
<dbReference type="OMA" id="ALDHIGH"/>
<dbReference type="OrthoDB" id="113847at4891"/>
<dbReference type="Proteomes" id="UP000001300">
    <property type="component" value="Chromosome A"/>
</dbReference>
<dbReference type="GO" id="GO:0008623">
    <property type="term" value="C:CHRAC"/>
    <property type="evidence" value="ECO:0000318"/>
    <property type="project" value="GO_Central"/>
</dbReference>
<dbReference type="GO" id="GO:0008622">
    <property type="term" value="C:epsilon DNA polymerase complex"/>
    <property type="evidence" value="ECO:0000318"/>
    <property type="project" value="GO_Central"/>
</dbReference>
<dbReference type="GO" id="GO:0031490">
    <property type="term" value="F:chromatin DNA binding"/>
    <property type="evidence" value="ECO:0000318"/>
    <property type="project" value="GO_Central"/>
</dbReference>
<dbReference type="GO" id="GO:0046982">
    <property type="term" value="F:protein heterodimerization activity"/>
    <property type="evidence" value="ECO:0007669"/>
    <property type="project" value="InterPro"/>
</dbReference>
<dbReference type="GO" id="GO:0006974">
    <property type="term" value="P:DNA damage response"/>
    <property type="evidence" value="ECO:0000318"/>
    <property type="project" value="GO_Central"/>
</dbReference>
<dbReference type="GO" id="GO:0031507">
    <property type="term" value="P:heterochromatin formation"/>
    <property type="evidence" value="ECO:0000318"/>
    <property type="project" value="GO_Central"/>
</dbReference>
<dbReference type="GO" id="GO:0006272">
    <property type="term" value="P:leading strand elongation"/>
    <property type="evidence" value="ECO:0000318"/>
    <property type="project" value="GO_Central"/>
</dbReference>
<dbReference type="CDD" id="cd22928">
    <property type="entry name" value="HFD_POLE3_DPB4"/>
    <property type="match status" value="1"/>
</dbReference>
<dbReference type="Gene3D" id="1.10.20.10">
    <property type="entry name" value="Histone, subunit A"/>
    <property type="match status" value="1"/>
</dbReference>
<dbReference type="InterPro" id="IPR003958">
    <property type="entry name" value="CBFA_NFYB_domain"/>
</dbReference>
<dbReference type="InterPro" id="IPR051377">
    <property type="entry name" value="DNA_Pol-Epsilon_Subunit"/>
</dbReference>
<dbReference type="InterPro" id="IPR009072">
    <property type="entry name" value="Histone-fold"/>
</dbReference>
<dbReference type="PANTHER" id="PTHR46172">
    <property type="entry name" value="DNA POLYMERASE EPSILON SUBUNIT 3"/>
    <property type="match status" value="1"/>
</dbReference>
<dbReference type="PANTHER" id="PTHR46172:SF1">
    <property type="entry name" value="DNA POLYMERASE EPSILON SUBUNIT 3"/>
    <property type="match status" value="1"/>
</dbReference>
<dbReference type="Pfam" id="PF00808">
    <property type="entry name" value="CBFD_NFYB_HMF"/>
    <property type="match status" value="1"/>
</dbReference>
<dbReference type="SUPFAM" id="SSF47113">
    <property type="entry name" value="Histone-fold"/>
    <property type="match status" value="1"/>
</dbReference>
<evidence type="ECO:0000250" key="1"/>
<evidence type="ECO:0000250" key="2">
    <source>
        <dbReference type="UniProtKB" id="Q04603"/>
    </source>
</evidence>
<evidence type="ECO:0000256" key="3">
    <source>
        <dbReference type="SAM" id="MobiDB-lite"/>
    </source>
</evidence>
<keyword id="KW-0235">DNA replication</keyword>
<keyword id="KW-0539">Nucleus</keyword>
<keyword id="KW-1185">Reference proteome</keyword>
<gene>
    <name type="primary">DPB4</name>
    <name type="ordered locus">YALI0A05401g</name>
</gene>
<comment type="function">
    <text evidence="2">As accessory component of the DNA polymerase epsilon (DNA polymerase II) participates in chromosomal DNA replication.</text>
</comment>
<comment type="subunit">
    <text evidence="1">Heterotetramer. Consists of four subunits: POL2, DPB2, DPB3 and DPB4 (By similarity).</text>
</comment>
<comment type="subcellular location">
    <subcellularLocation>
        <location evidence="1">Nucleus</location>
    </subcellularLocation>
</comment>
<comment type="miscellaneous">
    <text>In eukaryotes there are five DNA polymerases: alpha, beta, gamma, delta, and epsilon which are responsible for different reactions of DNA synthesis.</text>
</comment>
<feature type="chain" id="PRO_0000191753" description="DNA polymerase epsilon subunit D">
    <location>
        <begin position="1"/>
        <end position="163"/>
    </location>
</feature>
<feature type="region of interest" description="Disordered" evidence="3">
    <location>
        <begin position="1"/>
        <end position="22"/>
    </location>
</feature>
<feature type="region of interest" description="Disordered" evidence="3">
    <location>
        <begin position="126"/>
        <end position="163"/>
    </location>
</feature>
<feature type="compositionally biased region" description="Basic and acidic residues" evidence="3">
    <location>
        <begin position="126"/>
        <end position="142"/>
    </location>
</feature>
<feature type="compositionally biased region" description="Basic and acidic residues" evidence="3">
    <location>
        <begin position="154"/>
        <end position="163"/>
    </location>
</feature>